<keyword id="KW-0067">ATP-binding</keyword>
<keyword id="KW-0238">DNA-binding</keyword>
<keyword id="KW-0479">Metal-binding</keyword>
<keyword id="KW-0547">Nucleotide-binding</keyword>
<keyword id="KW-0678">Repressor</keyword>
<keyword id="KW-0804">Transcription</keyword>
<keyword id="KW-0805">Transcription regulation</keyword>
<keyword id="KW-0862">Zinc</keyword>
<keyword id="KW-0863">Zinc-finger</keyword>
<dbReference type="EMBL" id="CP000089">
    <property type="protein sequence ID" value="AAZ45361.1"/>
    <property type="molecule type" value="Genomic_DNA"/>
</dbReference>
<dbReference type="SMR" id="Q47IH0"/>
<dbReference type="STRING" id="159087.Daro_0604"/>
<dbReference type="KEGG" id="dar:Daro_0604"/>
<dbReference type="eggNOG" id="COG1327">
    <property type="taxonomic scope" value="Bacteria"/>
</dbReference>
<dbReference type="HOGENOM" id="CLU_108412_0_1_4"/>
<dbReference type="OrthoDB" id="9807461at2"/>
<dbReference type="GO" id="GO:0005524">
    <property type="term" value="F:ATP binding"/>
    <property type="evidence" value="ECO:0007669"/>
    <property type="project" value="UniProtKB-KW"/>
</dbReference>
<dbReference type="GO" id="GO:0003677">
    <property type="term" value="F:DNA binding"/>
    <property type="evidence" value="ECO:0007669"/>
    <property type="project" value="UniProtKB-KW"/>
</dbReference>
<dbReference type="GO" id="GO:0008270">
    <property type="term" value="F:zinc ion binding"/>
    <property type="evidence" value="ECO:0007669"/>
    <property type="project" value="UniProtKB-UniRule"/>
</dbReference>
<dbReference type="GO" id="GO:0045892">
    <property type="term" value="P:negative regulation of DNA-templated transcription"/>
    <property type="evidence" value="ECO:0007669"/>
    <property type="project" value="UniProtKB-UniRule"/>
</dbReference>
<dbReference type="HAMAP" id="MF_00440">
    <property type="entry name" value="NrdR"/>
    <property type="match status" value="1"/>
</dbReference>
<dbReference type="InterPro" id="IPR005144">
    <property type="entry name" value="ATP-cone_dom"/>
</dbReference>
<dbReference type="InterPro" id="IPR055173">
    <property type="entry name" value="NrdR-like_N"/>
</dbReference>
<dbReference type="InterPro" id="IPR003796">
    <property type="entry name" value="RNR_NrdR-like"/>
</dbReference>
<dbReference type="NCBIfam" id="TIGR00244">
    <property type="entry name" value="transcriptional regulator NrdR"/>
    <property type="match status" value="1"/>
</dbReference>
<dbReference type="PANTHER" id="PTHR30455">
    <property type="entry name" value="TRANSCRIPTIONAL REPRESSOR NRDR"/>
    <property type="match status" value="1"/>
</dbReference>
<dbReference type="PANTHER" id="PTHR30455:SF2">
    <property type="entry name" value="TRANSCRIPTIONAL REPRESSOR NRDR"/>
    <property type="match status" value="1"/>
</dbReference>
<dbReference type="Pfam" id="PF03477">
    <property type="entry name" value="ATP-cone"/>
    <property type="match status" value="1"/>
</dbReference>
<dbReference type="Pfam" id="PF22811">
    <property type="entry name" value="Zn_ribbon_NrdR"/>
    <property type="match status" value="1"/>
</dbReference>
<dbReference type="PROSITE" id="PS51161">
    <property type="entry name" value="ATP_CONE"/>
    <property type="match status" value="1"/>
</dbReference>
<name>NRDR_DECAR</name>
<sequence length="154" mass="17552">MKCPFCGAEDTAVADTRLNDEADVVRRRRKCNACDKRFTTYERAEIQLPQVVKKNGLRTEFSRAKLRASLELALRKRPVSIESVDAAVADIEERLLSAGEREVTTQQLGELVMRELKKLDKVAYIRFASVYRNFEDVDAFSRAIREVSPAAKKK</sequence>
<organism>
    <name type="scientific">Dechloromonas aromatica (strain RCB)</name>
    <dbReference type="NCBI Taxonomy" id="159087"/>
    <lineage>
        <taxon>Bacteria</taxon>
        <taxon>Pseudomonadati</taxon>
        <taxon>Pseudomonadota</taxon>
        <taxon>Betaproteobacteria</taxon>
        <taxon>Rhodocyclales</taxon>
        <taxon>Azonexaceae</taxon>
        <taxon>Dechloromonas</taxon>
    </lineage>
</organism>
<evidence type="ECO:0000255" key="1">
    <source>
        <dbReference type="HAMAP-Rule" id="MF_00440"/>
    </source>
</evidence>
<accession>Q47IH0</accession>
<protein>
    <recommendedName>
        <fullName evidence="1">Transcriptional repressor NrdR</fullName>
    </recommendedName>
</protein>
<proteinExistence type="inferred from homology"/>
<feature type="chain" id="PRO_0000230864" description="Transcriptional repressor NrdR">
    <location>
        <begin position="1"/>
        <end position="154"/>
    </location>
</feature>
<feature type="domain" description="ATP-cone" evidence="1">
    <location>
        <begin position="49"/>
        <end position="139"/>
    </location>
</feature>
<feature type="zinc finger region" evidence="1">
    <location>
        <begin position="3"/>
        <end position="34"/>
    </location>
</feature>
<reference key="1">
    <citation type="journal article" date="2009" name="BMC Genomics">
        <title>Metabolic analysis of the soil microbe Dechloromonas aromatica str. RCB: indications of a surprisingly complex life-style and cryptic anaerobic pathways for aromatic degradation.</title>
        <authorList>
            <person name="Salinero K.K."/>
            <person name="Keller K."/>
            <person name="Feil W.S."/>
            <person name="Feil H."/>
            <person name="Trong S."/>
            <person name="Di Bartolo G."/>
            <person name="Lapidus A."/>
        </authorList>
    </citation>
    <scope>NUCLEOTIDE SEQUENCE [LARGE SCALE GENOMIC DNA]</scope>
    <source>
        <strain>RCB</strain>
    </source>
</reference>
<comment type="function">
    <text evidence="1">Negatively regulates transcription of bacterial ribonucleotide reductase nrd genes and operons by binding to NrdR-boxes.</text>
</comment>
<comment type="cofactor">
    <cofactor evidence="1">
        <name>Zn(2+)</name>
        <dbReference type="ChEBI" id="CHEBI:29105"/>
    </cofactor>
    <text evidence="1">Binds 1 zinc ion.</text>
</comment>
<comment type="similarity">
    <text evidence="1">Belongs to the NrdR family.</text>
</comment>
<gene>
    <name evidence="1" type="primary">nrdR</name>
    <name type="ordered locus">Daro_0604</name>
</gene>